<reference key="1">
    <citation type="submission" date="2006-11" db="EMBL/GenBank/DDBJ databases">
        <title>Sequence of Campylobacter fetus subsp. fetus 82-40.</title>
        <authorList>
            <person name="Fouts D.E."/>
            <person name="Nelson K.E."/>
        </authorList>
    </citation>
    <scope>NUCLEOTIDE SEQUENCE [LARGE SCALE GENOMIC DNA]</scope>
    <source>
        <strain>82-40</strain>
    </source>
</reference>
<protein>
    <recommendedName>
        <fullName evidence="1">tRNA (guanine-N(1)-)-methyltransferase</fullName>
        <ecNumber evidence="1">2.1.1.228</ecNumber>
    </recommendedName>
    <alternativeName>
        <fullName evidence="1">M1G-methyltransferase</fullName>
    </alternativeName>
    <alternativeName>
        <fullName evidence="1">tRNA [GM37] methyltransferase</fullName>
    </alternativeName>
</protein>
<accession>A0RPR6</accession>
<dbReference type="EC" id="2.1.1.228" evidence="1"/>
<dbReference type="EMBL" id="CP000487">
    <property type="protein sequence ID" value="ABK83256.1"/>
    <property type="molecule type" value="Genomic_DNA"/>
</dbReference>
<dbReference type="RefSeq" id="WP_002849600.1">
    <property type="nucleotide sequence ID" value="NC_008599.1"/>
</dbReference>
<dbReference type="SMR" id="A0RPR6"/>
<dbReference type="GeneID" id="61064863"/>
<dbReference type="KEGG" id="cff:CFF8240_1035"/>
<dbReference type="PATRIC" id="fig|360106.6.peg.1007"/>
<dbReference type="eggNOG" id="COG0336">
    <property type="taxonomic scope" value="Bacteria"/>
</dbReference>
<dbReference type="HOGENOM" id="CLU_047363_0_1_7"/>
<dbReference type="Proteomes" id="UP000000760">
    <property type="component" value="Chromosome"/>
</dbReference>
<dbReference type="GO" id="GO:0005829">
    <property type="term" value="C:cytosol"/>
    <property type="evidence" value="ECO:0007669"/>
    <property type="project" value="TreeGrafter"/>
</dbReference>
<dbReference type="GO" id="GO:0052906">
    <property type="term" value="F:tRNA (guanine(37)-N1)-methyltransferase activity"/>
    <property type="evidence" value="ECO:0007669"/>
    <property type="project" value="UniProtKB-UniRule"/>
</dbReference>
<dbReference type="GO" id="GO:0002939">
    <property type="term" value="P:tRNA N1-guanine methylation"/>
    <property type="evidence" value="ECO:0007669"/>
    <property type="project" value="TreeGrafter"/>
</dbReference>
<dbReference type="CDD" id="cd18080">
    <property type="entry name" value="TrmD-like"/>
    <property type="match status" value="1"/>
</dbReference>
<dbReference type="Gene3D" id="3.40.1280.10">
    <property type="match status" value="1"/>
</dbReference>
<dbReference type="Gene3D" id="1.10.1270.20">
    <property type="entry name" value="tRNA(m1g37)methyltransferase, domain 2"/>
    <property type="match status" value="1"/>
</dbReference>
<dbReference type="HAMAP" id="MF_00605">
    <property type="entry name" value="TrmD"/>
    <property type="match status" value="1"/>
</dbReference>
<dbReference type="InterPro" id="IPR029028">
    <property type="entry name" value="Alpha/beta_knot_MTases"/>
</dbReference>
<dbReference type="InterPro" id="IPR023148">
    <property type="entry name" value="tRNA_m1G_MeTrfase_C_sf"/>
</dbReference>
<dbReference type="InterPro" id="IPR002649">
    <property type="entry name" value="tRNA_m1G_MeTrfase_TrmD"/>
</dbReference>
<dbReference type="InterPro" id="IPR029026">
    <property type="entry name" value="tRNA_m1G_MTases_N"/>
</dbReference>
<dbReference type="InterPro" id="IPR016009">
    <property type="entry name" value="tRNA_MeTrfase_TRMD/TRM10"/>
</dbReference>
<dbReference type="NCBIfam" id="NF000648">
    <property type="entry name" value="PRK00026.1"/>
    <property type="match status" value="1"/>
</dbReference>
<dbReference type="NCBIfam" id="TIGR00088">
    <property type="entry name" value="trmD"/>
    <property type="match status" value="1"/>
</dbReference>
<dbReference type="PANTHER" id="PTHR46417">
    <property type="entry name" value="TRNA (GUANINE-N(1)-)-METHYLTRANSFERASE"/>
    <property type="match status" value="1"/>
</dbReference>
<dbReference type="PANTHER" id="PTHR46417:SF1">
    <property type="entry name" value="TRNA (GUANINE-N(1)-)-METHYLTRANSFERASE"/>
    <property type="match status" value="1"/>
</dbReference>
<dbReference type="Pfam" id="PF01746">
    <property type="entry name" value="tRNA_m1G_MT"/>
    <property type="match status" value="1"/>
</dbReference>
<dbReference type="PIRSF" id="PIRSF000386">
    <property type="entry name" value="tRNA_mtase"/>
    <property type="match status" value="1"/>
</dbReference>
<dbReference type="SUPFAM" id="SSF75217">
    <property type="entry name" value="alpha/beta knot"/>
    <property type="match status" value="1"/>
</dbReference>
<gene>
    <name evidence="1" type="primary">trmD</name>
    <name type="ordered locus">CFF8240_1035</name>
</gene>
<sequence>MQFNFITIFPNLIKPYFDDSILSRAIKSSIIKLNFINPRDFSADKHLKVDDYMIAGGAGLLMKAQPVFDAIDSLDSTHIIYLTPAGKKFTQNDAKRLSKFENITFICGRYEGIDERIIEEKVNEVFCIGDFIMTGGELGALCMCDAITRNLNGVLGNPNSLDIESFEYGMLESPSFTKPNVYNGLSVISAFLKGNHGKINALKNNMALCKTRFFRPDLYQKLRSPKKQKEKR</sequence>
<feature type="chain" id="PRO_1000006465" description="tRNA (guanine-N(1)-)-methyltransferase">
    <location>
        <begin position="1"/>
        <end position="232"/>
    </location>
</feature>
<feature type="binding site" evidence="1">
    <location>
        <position position="108"/>
    </location>
    <ligand>
        <name>S-adenosyl-L-methionine</name>
        <dbReference type="ChEBI" id="CHEBI:59789"/>
    </ligand>
</feature>
<feature type="binding site" evidence="1">
    <location>
        <begin position="128"/>
        <end position="133"/>
    </location>
    <ligand>
        <name>S-adenosyl-L-methionine</name>
        <dbReference type="ChEBI" id="CHEBI:59789"/>
    </ligand>
</feature>
<organism>
    <name type="scientific">Campylobacter fetus subsp. fetus (strain 82-40)</name>
    <dbReference type="NCBI Taxonomy" id="360106"/>
    <lineage>
        <taxon>Bacteria</taxon>
        <taxon>Pseudomonadati</taxon>
        <taxon>Campylobacterota</taxon>
        <taxon>Epsilonproteobacteria</taxon>
        <taxon>Campylobacterales</taxon>
        <taxon>Campylobacteraceae</taxon>
        <taxon>Campylobacter</taxon>
    </lineage>
</organism>
<name>TRMD_CAMFF</name>
<comment type="function">
    <text evidence="1">Specifically methylates guanosine-37 in various tRNAs.</text>
</comment>
<comment type="catalytic activity">
    <reaction evidence="1">
        <text>guanosine(37) in tRNA + S-adenosyl-L-methionine = N(1)-methylguanosine(37) in tRNA + S-adenosyl-L-homocysteine + H(+)</text>
        <dbReference type="Rhea" id="RHEA:36899"/>
        <dbReference type="Rhea" id="RHEA-COMP:10145"/>
        <dbReference type="Rhea" id="RHEA-COMP:10147"/>
        <dbReference type="ChEBI" id="CHEBI:15378"/>
        <dbReference type="ChEBI" id="CHEBI:57856"/>
        <dbReference type="ChEBI" id="CHEBI:59789"/>
        <dbReference type="ChEBI" id="CHEBI:73542"/>
        <dbReference type="ChEBI" id="CHEBI:74269"/>
        <dbReference type="EC" id="2.1.1.228"/>
    </reaction>
</comment>
<comment type="subunit">
    <text evidence="1">Homodimer.</text>
</comment>
<comment type="subcellular location">
    <subcellularLocation>
        <location evidence="1">Cytoplasm</location>
    </subcellularLocation>
</comment>
<comment type="similarity">
    <text evidence="1">Belongs to the RNA methyltransferase TrmD family.</text>
</comment>
<keyword id="KW-0963">Cytoplasm</keyword>
<keyword id="KW-0489">Methyltransferase</keyword>
<keyword id="KW-0949">S-adenosyl-L-methionine</keyword>
<keyword id="KW-0808">Transferase</keyword>
<keyword id="KW-0819">tRNA processing</keyword>
<evidence type="ECO:0000255" key="1">
    <source>
        <dbReference type="HAMAP-Rule" id="MF_00605"/>
    </source>
</evidence>
<proteinExistence type="inferred from homology"/>